<accession>P0DTQ3</accession>
<protein>
    <recommendedName>
        <fullName>Apolipoprotein C-I, acidic form</fullName>
        <shortName>Apo-CIA</shortName>
        <shortName>ApoC-IA</shortName>
    </recommendedName>
    <alternativeName>
        <fullName>Apolipoprotein C1A</fullName>
    </alternativeName>
    <component>
        <recommendedName>
            <fullName>Truncated apolipoprotein C-I, acidic form</fullName>
            <shortName>Apo-CIA'</shortName>
            <shortName>ApoC-IA'</shortName>
        </recommendedName>
    </component>
</protein>
<sequence length="81" mass="9181">MRLFLSLLVVVLSMVLKGPTPAQGVPDVSNPFDVLEEFGKTLEDNVGEFINLITQSELPAKTRDWFSETFRKVKEKLRINS</sequence>
<gene>
    <name type="primary">APOC1A</name>
</gene>
<comment type="subcellular location">
    <subcellularLocation>
        <location evidence="1">Secreted</location>
    </subcellularLocation>
</comment>
<comment type="miscellaneous">
    <text evidence="2">Apolipoprotein C-I is present in acidic (APOC1A) and basic (APOC1B) forms in P.paniscus, P.abelii and P.troglodytes and perhaps also in baboons and macaques. The two genes for ApoC-I arose through a duplication process that occurred after the divergence of New World monkeys from the human lineage. In human, the acidic form has become a pseudogene sometime between the divergence of bonobos and chimpanzees from the human lineage and the appearance of the Denisovans. Pseudogenization resulted when the codon for the penultimate amino acid in the signal sequence was changed to a stop codon.</text>
</comment>
<comment type="similarity">
    <text evidence="5">Belongs to the apolipoprotein C1 family.</text>
</comment>
<feature type="signal peptide" evidence="4">
    <location>
        <begin position="1"/>
        <end position="24"/>
    </location>
</feature>
<feature type="chain" id="PRO_0000448368" description="Apolipoprotein C-I, acidic form">
    <location>
        <begin position="25"/>
        <end position="81"/>
    </location>
</feature>
<feature type="chain" id="PRO_0000448369" description="Truncated apolipoprotein C-I, acidic form" evidence="3">
    <location>
        <begin position="27"/>
        <end position="81"/>
    </location>
</feature>
<name>APO1A_MACFA</name>
<keyword id="KW-0445">Lipid transport</keyword>
<keyword id="KW-1185">Reference proteome</keyword>
<keyword id="KW-0964">Secreted</keyword>
<keyword id="KW-0732">Signal</keyword>
<keyword id="KW-0813">Transport</keyword>
<reference key="1">
    <citation type="submission" date="2018-06" db="EMBL/GenBank/DDBJ databases">
        <authorList>
            <person name="Dutcher S."/>
            <person name="Fulton R."/>
            <person name="Lindsay T."/>
        </authorList>
    </citation>
    <scope>NUCLEOTIDE SEQUENCE [LARGE SCALE GENOMIC DNA]</scope>
</reference>
<reference key="2">
    <citation type="unpublished observations" date="2019-08">
        <authorList>
            <person name="Puppione D.L."/>
        </authorList>
    </citation>
    <scope>IDENTIFICATION</scope>
</reference>
<reference key="3">
    <citation type="journal article" date="2013" name="Front. Biol.">
        <title>Proteogenomic Review of the Changes in Primate apoC-I during Evolution.</title>
        <authorList>
            <person name="Puppione D."/>
            <person name="Whitelegge J.P."/>
        </authorList>
    </citation>
    <scope>REVIEW</scope>
</reference>
<reference key="4">
    <citation type="journal article" date="2014" name="Comp. Biochem. Physiol.">
        <title>Higher primates, but not New World monkeys, have a duplicate set of enhancers flanking their apoC-I genes.</title>
        <authorList>
            <person name="Puppione D.L."/>
        </authorList>
    </citation>
    <scope>GENE DUPLICATION</scope>
</reference>
<dbReference type="EMBL" id="QNVO02000225">
    <property type="status" value="NOT_ANNOTATED_CDS"/>
    <property type="molecule type" value="Genomic_DNA"/>
</dbReference>
<dbReference type="SMR" id="P0DTQ3"/>
<dbReference type="Proteomes" id="UP000233100">
    <property type="component" value="Unplaced"/>
</dbReference>
<dbReference type="GO" id="GO:0034364">
    <property type="term" value="C:high-density lipoprotein particle"/>
    <property type="evidence" value="ECO:0007669"/>
    <property type="project" value="TreeGrafter"/>
</dbReference>
<dbReference type="GO" id="GO:0034361">
    <property type="term" value="C:very-low-density lipoprotein particle"/>
    <property type="evidence" value="ECO:0007669"/>
    <property type="project" value="TreeGrafter"/>
</dbReference>
<dbReference type="GO" id="GO:0005504">
    <property type="term" value="F:fatty acid binding"/>
    <property type="evidence" value="ECO:0007669"/>
    <property type="project" value="TreeGrafter"/>
</dbReference>
<dbReference type="GO" id="GO:0004859">
    <property type="term" value="F:phospholipase inhibitor activity"/>
    <property type="evidence" value="ECO:0007669"/>
    <property type="project" value="TreeGrafter"/>
</dbReference>
<dbReference type="GO" id="GO:0006869">
    <property type="term" value="P:lipid transport"/>
    <property type="evidence" value="ECO:0007669"/>
    <property type="project" value="UniProtKB-KW"/>
</dbReference>
<dbReference type="GO" id="GO:0042157">
    <property type="term" value="P:lipoprotein metabolic process"/>
    <property type="evidence" value="ECO:0007669"/>
    <property type="project" value="InterPro"/>
</dbReference>
<dbReference type="GO" id="GO:0032375">
    <property type="term" value="P:negative regulation of cholesterol transport"/>
    <property type="evidence" value="ECO:0007669"/>
    <property type="project" value="TreeGrafter"/>
</dbReference>
<dbReference type="GO" id="GO:0050995">
    <property type="term" value="P:negative regulation of lipid catabolic process"/>
    <property type="evidence" value="ECO:0007669"/>
    <property type="project" value="TreeGrafter"/>
</dbReference>
<dbReference type="GO" id="GO:0010916">
    <property type="term" value="P:negative regulation of very-low-density lipoprotein particle clearance"/>
    <property type="evidence" value="ECO:0007669"/>
    <property type="project" value="TreeGrafter"/>
</dbReference>
<dbReference type="GO" id="GO:0006641">
    <property type="term" value="P:triglyceride metabolic process"/>
    <property type="evidence" value="ECO:0007669"/>
    <property type="project" value="TreeGrafter"/>
</dbReference>
<dbReference type="GO" id="GO:0034447">
    <property type="term" value="P:very-low-density lipoprotein particle clearance"/>
    <property type="evidence" value="ECO:0007669"/>
    <property type="project" value="TreeGrafter"/>
</dbReference>
<dbReference type="Gene3D" id="4.10.260.30">
    <property type="entry name" value="Apolipoprotein C-I"/>
    <property type="match status" value="1"/>
</dbReference>
<dbReference type="InterPro" id="IPR043081">
    <property type="entry name" value="ApoC-1_sf"/>
</dbReference>
<dbReference type="InterPro" id="IPR006781">
    <property type="entry name" value="ApoC-I"/>
</dbReference>
<dbReference type="PANTHER" id="PTHR16565">
    <property type="entry name" value="APOLIPOPROTEIN C-I"/>
    <property type="match status" value="1"/>
</dbReference>
<dbReference type="PANTHER" id="PTHR16565:SF3">
    <property type="entry name" value="APOLIPOPROTEIN C-I, ACIDIC FORM"/>
    <property type="match status" value="1"/>
</dbReference>
<dbReference type="Pfam" id="PF04691">
    <property type="entry name" value="ApoC-I"/>
    <property type="match status" value="1"/>
</dbReference>
<proteinExistence type="inferred from homology"/>
<evidence type="ECO:0000250" key="1">
    <source>
        <dbReference type="UniProtKB" id="P02654"/>
    </source>
</evidence>
<evidence type="ECO:0000250" key="2">
    <source>
        <dbReference type="UniProtKB" id="P0CE39"/>
    </source>
</evidence>
<evidence type="ECO:0000250" key="3">
    <source>
        <dbReference type="UniProtKB" id="P86336"/>
    </source>
</evidence>
<evidence type="ECO:0000255" key="4"/>
<evidence type="ECO:0000305" key="5"/>
<organism>
    <name type="scientific">Macaca fascicularis</name>
    <name type="common">Crab-eating macaque</name>
    <name type="synonym">Cynomolgus monkey</name>
    <dbReference type="NCBI Taxonomy" id="9541"/>
    <lineage>
        <taxon>Eukaryota</taxon>
        <taxon>Metazoa</taxon>
        <taxon>Chordata</taxon>
        <taxon>Craniata</taxon>
        <taxon>Vertebrata</taxon>
        <taxon>Euteleostomi</taxon>
        <taxon>Mammalia</taxon>
        <taxon>Eutheria</taxon>
        <taxon>Euarchontoglires</taxon>
        <taxon>Primates</taxon>
        <taxon>Haplorrhini</taxon>
        <taxon>Catarrhini</taxon>
        <taxon>Cercopithecidae</taxon>
        <taxon>Cercopithecinae</taxon>
        <taxon>Macaca</taxon>
    </lineage>
</organism>